<protein>
    <recommendedName>
        <fullName evidence="1">Anthranilate phosphoribosyltransferase</fullName>
        <ecNumber evidence="1">2.4.2.18</ecNumber>
    </recommendedName>
</protein>
<sequence>MNINDILKKLINKSDLEIDEAEELAKAIIRGEVPEILVSAILVALRMKGESKNEIVGFARAMRELAIKIDVPNAIDTAGTGGDGLGTVNVSTASAILLSLINPVAKHGNRAVSGKSGSADVLEALGYNIIVPPERAKELVHKTNFVFLFSQYYHPAMKNVANVRKTLGIRTIFNILGPLTNPANAKYQLMGVFSKDHLDLLSKSAYELDFNKVILVHGEPGIDEVSPIGKTFMKIVSKRGIEEVKFDVTDFGISSIPIDKLIVNSAEDSAIKIVRAFLGKDEHVAEFIKINTAVALFALDKVSDFKEGYEYAKYLIENSVNKLNEIISLNGDLTKLKTIMVKSSG</sequence>
<feature type="chain" id="PRO_1000204189" description="Anthranilate phosphoribosyltransferase">
    <location>
        <begin position="1"/>
        <end position="345"/>
    </location>
</feature>
<feature type="binding site" evidence="1">
    <location>
        <position position="79"/>
    </location>
    <ligand>
        <name>5-phospho-alpha-D-ribose 1-diphosphate</name>
        <dbReference type="ChEBI" id="CHEBI:58017"/>
    </ligand>
</feature>
<feature type="binding site" evidence="1">
    <location>
        <position position="79"/>
    </location>
    <ligand>
        <name>anthranilate</name>
        <dbReference type="ChEBI" id="CHEBI:16567"/>
        <label>1</label>
    </ligand>
</feature>
<feature type="binding site" evidence="1">
    <location>
        <begin position="82"/>
        <end position="83"/>
    </location>
    <ligand>
        <name>5-phospho-alpha-D-ribose 1-diphosphate</name>
        <dbReference type="ChEBI" id="CHEBI:58017"/>
    </ligand>
</feature>
<feature type="binding site" evidence="1">
    <location>
        <position position="87"/>
    </location>
    <ligand>
        <name>5-phospho-alpha-D-ribose 1-diphosphate</name>
        <dbReference type="ChEBI" id="CHEBI:58017"/>
    </ligand>
</feature>
<feature type="binding site" evidence="1">
    <location>
        <begin position="89"/>
        <end position="92"/>
    </location>
    <ligand>
        <name>5-phospho-alpha-D-ribose 1-diphosphate</name>
        <dbReference type="ChEBI" id="CHEBI:58017"/>
    </ligand>
</feature>
<feature type="binding site" evidence="1">
    <location>
        <position position="91"/>
    </location>
    <ligand>
        <name>Mg(2+)</name>
        <dbReference type="ChEBI" id="CHEBI:18420"/>
        <label>1</label>
    </ligand>
</feature>
<feature type="binding site" evidence="1">
    <location>
        <begin position="106"/>
        <end position="114"/>
    </location>
    <ligand>
        <name>5-phospho-alpha-D-ribose 1-diphosphate</name>
        <dbReference type="ChEBI" id="CHEBI:58017"/>
    </ligand>
</feature>
<feature type="binding site" evidence="1">
    <location>
        <position position="109"/>
    </location>
    <ligand>
        <name>anthranilate</name>
        <dbReference type="ChEBI" id="CHEBI:16567"/>
        <label>1</label>
    </ligand>
</feature>
<feature type="binding site" evidence="1">
    <location>
        <position position="118"/>
    </location>
    <ligand>
        <name>5-phospho-alpha-D-ribose 1-diphosphate</name>
        <dbReference type="ChEBI" id="CHEBI:58017"/>
    </ligand>
</feature>
<feature type="binding site" evidence="1">
    <location>
        <position position="164"/>
    </location>
    <ligand>
        <name>anthranilate</name>
        <dbReference type="ChEBI" id="CHEBI:16567"/>
        <label>2</label>
    </ligand>
</feature>
<feature type="binding site" evidence="1">
    <location>
        <position position="223"/>
    </location>
    <ligand>
        <name>Mg(2+)</name>
        <dbReference type="ChEBI" id="CHEBI:18420"/>
        <label>2</label>
    </ligand>
</feature>
<feature type="binding site" evidence="1">
    <location>
        <position position="224"/>
    </location>
    <ligand>
        <name>Mg(2+)</name>
        <dbReference type="ChEBI" id="CHEBI:18420"/>
        <label>1</label>
    </ligand>
</feature>
<feature type="binding site" evidence="1">
    <location>
        <position position="224"/>
    </location>
    <ligand>
        <name>Mg(2+)</name>
        <dbReference type="ChEBI" id="CHEBI:18420"/>
        <label>2</label>
    </ligand>
</feature>
<name>TRPD_SACI3</name>
<keyword id="KW-0028">Amino-acid biosynthesis</keyword>
<keyword id="KW-0057">Aromatic amino acid biosynthesis</keyword>
<keyword id="KW-0328">Glycosyltransferase</keyword>
<keyword id="KW-0460">Magnesium</keyword>
<keyword id="KW-0479">Metal-binding</keyword>
<keyword id="KW-0808">Transferase</keyword>
<keyword id="KW-0822">Tryptophan biosynthesis</keyword>
<reference key="1">
    <citation type="journal article" date="2009" name="Proc. Natl. Acad. Sci. U.S.A.">
        <title>Biogeography of the Sulfolobus islandicus pan-genome.</title>
        <authorList>
            <person name="Reno M.L."/>
            <person name="Held N.L."/>
            <person name="Fields C.J."/>
            <person name="Burke P.V."/>
            <person name="Whitaker R.J."/>
        </authorList>
    </citation>
    <scope>NUCLEOTIDE SEQUENCE [LARGE SCALE GENOMIC DNA]</scope>
    <source>
        <strain>M.16.27</strain>
    </source>
</reference>
<gene>
    <name evidence="1" type="primary">trpD</name>
    <name type="ordered locus">M1627_1380</name>
</gene>
<dbReference type="EC" id="2.4.2.18" evidence="1"/>
<dbReference type="EMBL" id="CP001401">
    <property type="protein sequence ID" value="ACP55263.1"/>
    <property type="molecule type" value="Genomic_DNA"/>
</dbReference>
<dbReference type="RefSeq" id="WP_012718813.1">
    <property type="nucleotide sequence ID" value="NC_012632.1"/>
</dbReference>
<dbReference type="SMR" id="C3N5I8"/>
<dbReference type="GeneID" id="84058689"/>
<dbReference type="KEGG" id="sim:M1627_1380"/>
<dbReference type="HOGENOM" id="CLU_034315_2_1_2"/>
<dbReference type="UniPathway" id="UPA00035">
    <property type="reaction ID" value="UER00041"/>
</dbReference>
<dbReference type="Proteomes" id="UP000002307">
    <property type="component" value="Chromosome"/>
</dbReference>
<dbReference type="GO" id="GO:0005829">
    <property type="term" value="C:cytosol"/>
    <property type="evidence" value="ECO:0007669"/>
    <property type="project" value="TreeGrafter"/>
</dbReference>
<dbReference type="GO" id="GO:0004048">
    <property type="term" value="F:anthranilate phosphoribosyltransferase activity"/>
    <property type="evidence" value="ECO:0007669"/>
    <property type="project" value="UniProtKB-UniRule"/>
</dbReference>
<dbReference type="GO" id="GO:0000287">
    <property type="term" value="F:magnesium ion binding"/>
    <property type="evidence" value="ECO:0007669"/>
    <property type="project" value="UniProtKB-UniRule"/>
</dbReference>
<dbReference type="GO" id="GO:0000162">
    <property type="term" value="P:L-tryptophan biosynthetic process"/>
    <property type="evidence" value="ECO:0007669"/>
    <property type="project" value="UniProtKB-UniRule"/>
</dbReference>
<dbReference type="FunFam" id="3.40.1030.10:FF:000002">
    <property type="entry name" value="Anthranilate phosphoribosyltransferase"/>
    <property type="match status" value="1"/>
</dbReference>
<dbReference type="Gene3D" id="3.40.1030.10">
    <property type="entry name" value="Nucleoside phosphorylase/phosphoribosyltransferase catalytic domain"/>
    <property type="match status" value="1"/>
</dbReference>
<dbReference type="Gene3D" id="1.20.970.10">
    <property type="entry name" value="Transferase, Pyrimidine Nucleoside Phosphorylase, Chain C"/>
    <property type="match status" value="1"/>
</dbReference>
<dbReference type="HAMAP" id="MF_00211">
    <property type="entry name" value="TrpD"/>
    <property type="match status" value="1"/>
</dbReference>
<dbReference type="InterPro" id="IPR005940">
    <property type="entry name" value="Anthranilate_Pribosyl_Tfrase"/>
</dbReference>
<dbReference type="InterPro" id="IPR000312">
    <property type="entry name" value="Glycosyl_Trfase_fam3"/>
</dbReference>
<dbReference type="InterPro" id="IPR017459">
    <property type="entry name" value="Glycosyl_Trfase_fam3_N_dom"/>
</dbReference>
<dbReference type="InterPro" id="IPR036320">
    <property type="entry name" value="Glycosyl_Trfase_fam3_N_dom_sf"/>
</dbReference>
<dbReference type="InterPro" id="IPR035902">
    <property type="entry name" value="Nuc_phospho_transferase"/>
</dbReference>
<dbReference type="NCBIfam" id="TIGR01245">
    <property type="entry name" value="trpD"/>
    <property type="match status" value="1"/>
</dbReference>
<dbReference type="PANTHER" id="PTHR43285">
    <property type="entry name" value="ANTHRANILATE PHOSPHORIBOSYLTRANSFERASE"/>
    <property type="match status" value="1"/>
</dbReference>
<dbReference type="PANTHER" id="PTHR43285:SF2">
    <property type="entry name" value="ANTHRANILATE PHOSPHORIBOSYLTRANSFERASE"/>
    <property type="match status" value="1"/>
</dbReference>
<dbReference type="Pfam" id="PF02885">
    <property type="entry name" value="Glycos_trans_3N"/>
    <property type="match status" value="1"/>
</dbReference>
<dbReference type="Pfam" id="PF00591">
    <property type="entry name" value="Glycos_transf_3"/>
    <property type="match status" value="1"/>
</dbReference>
<dbReference type="SUPFAM" id="SSF52418">
    <property type="entry name" value="Nucleoside phosphorylase/phosphoribosyltransferase catalytic domain"/>
    <property type="match status" value="1"/>
</dbReference>
<dbReference type="SUPFAM" id="SSF47648">
    <property type="entry name" value="Nucleoside phosphorylase/phosphoribosyltransferase N-terminal domain"/>
    <property type="match status" value="1"/>
</dbReference>
<proteinExistence type="inferred from homology"/>
<organism>
    <name type="scientific">Saccharolobus islandicus (strain M.16.27)</name>
    <name type="common">Sulfolobus islandicus</name>
    <dbReference type="NCBI Taxonomy" id="427318"/>
    <lineage>
        <taxon>Archaea</taxon>
        <taxon>Thermoproteota</taxon>
        <taxon>Thermoprotei</taxon>
        <taxon>Sulfolobales</taxon>
        <taxon>Sulfolobaceae</taxon>
        <taxon>Saccharolobus</taxon>
    </lineage>
</organism>
<comment type="function">
    <text evidence="1">Catalyzes the transfer of the phosphoribosyl group of 5-phosphorylribose-1-pyrophosphate (PRPP) to anthranilate to yield N-(5'-phosphoribosyl)-anthranilate (PRA).</text>
</comment>
<comment type="catalytic activity">
    <reaction evidence="1">
        <text>N-(5-phospho-beta-D-ribosyl)anthranilate + diphosphate = 5-phospho-alpha-D-ribose 1-diphosphate + anthranilate</text>
        <dbReference type="Rhea" id="RHEA:11768"/>
        <dbReference type="ChEBI" id="CHEBI:16567"/>
        <dbReference type="ChEBI" id="CHEBI:18277"/>
        <dbReference type="ChEBI" id="CHEBI:33019"/>
        <dbReference type="ChEBI" id="CHEBI:58017"/>
        <dbReference type="EC" id="2.4.2.18"/>
    </reaction>
</comment>
<comment type="cofactor">
    <cofactor evidence="1">
        <name>Mg(2+)</name>
        <dbReference type="ChEBI" id="CHEBI:18420"/>
    </cofactor>
    <text evidence="1">Binds 2 magnesium ions per monomer.</text>
</comment>
<comment type="pathway">
    <text evidence="1">Amino-acid biosynthesis; L-tryptophan biosynthesis; L-tryptophan from chorismate: step 2/5.</text>
</comment>
<comment type="subunit">
    <text evidence="1">Homodimer.</text>
</comment>
<comment type="similarity">
    <text evidence="1">Belongs to the anthranilate phosphoribosyltransferase family.</text>
</comment>
<evidence type="ECO:0000255" key="1">
    <source>
        <dbReference type="HAMAP-Rule" id="MF_00211"/>
    </source>
</evidence>
<accession>C3N5I8</accession>